<feature type="chain" id="PRO_1000126495" description="Small ribosomal subunit protein bS20">
    <location>
        <begin position="1"/>
        <end position="100"/>
    </location>
</feature>
<keyword id="KW-1185">Reference proteome</keyword>
<keyword id="KW-0687">Ribonucleoprotein</keyword>
<keyword id="KW-0689">Ribosomal protein</keyword>
<keyword id="KW-0694">RNA-binding</keyword>
<keyword id="KW-0699">rRNA-binding</keyword>
<protein>
    <recommendedName>
        <fullName evidence="1">Small ribosomal subunit protein bS20</fullName>
    </recommendedName>
    <alternativeName>
        <fullName evidence="2">30S ribosomal protein S20</fullName>
    </alternativeName>
</protein>
<reference key="1">
    <citation type="journal article" date="2007" name="PLoS Genet.">
        <title>Patterns and implications of gene gain and loss in the evolution of Prochlorococcus.</title>
        <authorList>
            <person name="Kettler G.C."/>
            <person name="Martiny A.C."/>
            <person name="Huang K."/>
            <person name="Zucker J."/>
            <person name="Coleman M.L."/>
            <person name="Rodrigue S."/>
            <person name="Chen F."/>
            <person name="Lapidus A."/>
            <person name="Ferriera S."/>
            <person name="Johnson J."/>
            <person name="Steglich C."/>
            <person name="Church G.M."/>
            <person name="Richardson P."/>
            <person name="Chisholm S.W."/>
        </authorList>
    </citation>
    <scope>NUCLEOTIDE SEQUENCE [LARGE SCALE GENOMIC DNA]</scope>
    <source>
        <strain>MIT 9211</strain>
    </source>
</reference>
<comment type="function">
    <text evidence="1">Binds directly to 16S ribosomal RNA.</text>
</comment>
<comment type="similarity">
    <text evidence="1">Belongs to the bacterial ribosomal protein bS20 family.</text>
</comment>
<sequence>MANNNSAKKRIQIAERNRLQNRSYKSAMRTLMKRCLTAAGSYLEKPGEEAKANLQQNINEAFSKIDKAVKKGVLHRNNGANKKSRLNAAVKKLIEPATKR</sequence>
<gene>
    <name evidence="1" type="primary">rpsT</name>
    <name evidence="1" type="synonym">rps20</name>
    <name type="ordered locus">P9211_16091</name>
</gene>
<proteinExistence type="inferred from homology"/>
<accession>A9BCH8</accession>
<organism>
    <name type="scientific">Prochlorococcus marinus (strain MIT 9211)</name>
    <dbReference type="NCBI Taxonomy" id="93059"/>
    <lineage>
        <taxon>Bacteria</taxon>
        <taxon>Bacillati</taxon>
        <taxon>Cyanobacteriota</taxon>
        <taxon>Cyanophyceae</taxon>
        <taxon>Synechococcales</taxon>
        <taxon>Prochlorococcaceae</taxon>
        <taxon>Prochlorococcus</taxon>
    </lineage>
</organism>
<name>RS20_PROM4</name>
<evidence type="ECO:0000255" key="1">
    <source>
        <dbReference type="HAMAP-Rule" id="MF_00500"/>
    </source>
</evidence>
<evidence type="ECO:0000305" key="2"/>
<dbReference type="EMBL" id="CP000878">
    <property type="protein sequence ID" value="ABX09540.1"/>
    <property type="molecule type" value="Genomic_DNA"/>
</dbReference>
<dbReference type="RefSeq" id="WP_012196161.1">
    <property type="nucleotide sequence ID" value="NC_009976.1"/>
</dbReference>
<dbReference type="SMR" id="A9BCH8"/>
<dbReference type="STRING" id="93059.P9211_16091"/>
<dbReference type="KEGG" id="pmj:P9211_16091"/>
<dbReference type="eggNOG" id="COG0268">
    <property type="taxonomic scope" value="Bacteria"/>
</dbReference>
<dbReference type="HOGENOM" id="CLU_160655_5_0_3"/>
<dbReference type="OrthoDB" id="9808392at2"/>
<dbReference type="Proteomes" id="UP000000788">
    <property type="component" value="Chromosome"/>
</dbReference>
<dbReference type="GO" id="GO:0015935">
    <property type="term" value="C:small ribosomal subunit"/>
    <property type="evidence" value="ECO:0007669"/>
    <property type="project" value="TreeGrafter"/>
</dbReference>
<dbReference type="GO" id="GO:0070181">
    <property type="term" value="F:small ribosomal subunit rRNA binding"/>
    <property type="evidence" value="ECO:0007669"/>
    <property type="project" value="TreeGrafter"/>
</dbReference>
<dbReference type="GO" id="GO:0003735">
    <property type="term" value="F:structural constituent of ribosome"/>
    <property type="evidence" value="ECO:0007669"/>
    <property type="project" value="InterPro"/>
</dbReference>
<dbReference type="GO" id="GO:0006412">
    <property type="term" value="P:translation"/>
    <property type="evidence" value="ECO:0007669"/>
    <property type="project" value="UniProtKB-UniRule"/>
</dbReference>
<dbReference type="FunFam" id="1.20.58.110:FF:000001">
    <property type="entry name" value="30S ribosomal protein S20"/>
    <property type="match status" value="1"/>
</dbReference>
<dbReference type="Gene3D" id="1.20.58.110">
    <property type="entry name" value="Ribosomal protein S20"/>
    <property type="match status" value="1"/>
</dbReference>
<dbReference type="HAMAP" id="MF_00500">
    <property type="entry name" value="Ribosomal_bS20"/>
    <property type="match status" value="1"/>
</dbReference>
<dbReference type="InterPro" id="IPR002583">
    <property type="entry name" value="Ribosomal_bS20"/>
</dbReference>
<dbReference type="InterPro" id="IPR036510">
    <property type="entry name" value="Ribosomal_bS20_sf"/>
</dbReference>
<dbReference type="NCBIfam" id="TIGR00029">
    <property type="entry name" value="S20"/>
    <property type="match status" value="1"/>
</dbReference>
<dbReference type="PANTHER" id="PTHR33398">
    <property type="entry name" value="30S RIBOSOMAL PROTEIN S20"/>
    <property type="match status" value="1"/>
</dbReference>
<dbReference type="PANTHER" id="PTHR33398:SF1">
    <property type="entry name" value="SMALL RIBOSOMAL SUBUNIT PROTEIN BS20C"/>
    <property type="match status" value="1"/>
</dbReference>
<dbReference type="Pfam" id="PF01649">
    <property type="entry name" value="Ribosomal_S20p"/>
    <property type="match status" value="1"/>
</dbReference>
<dbReference type="SUPFAM" id="SSF46992">
    <property type="entry name" value="Ribosomal protein S20"/>
    <property type="match status" value="1"/>
</dbReference>